<keyword id="KW-0963">Cytoplasm</keyword>
<keyword id="KW-0903">Direct protein sequencing</keyword>
<keyword id="KW-0328">Glycosyltransferase</keyword>
<keyword id="KW-0808">Transferase</keyword>
<sequence length="9" mass="923">GLPGYFGVN</sequence>
<accession>P86897</accession>
<name>GTF4_LEUME</name>
<feature type="chain" id="PRO_0000406598" description="Dextransucrase">
    <location>
        <begin position="1"/>
        <end position="9" status="greater than"/>
    </location>
</feature>
<feature type="non-terminal residue" evidence="4">
    <location>
        <position position="9"/>
    </location>
</feature>
<evidence type="ECO:0000250" key="1">
    <source>
        <dbReference type="UniProtKB" id="P85080"/>
    </source>
</evidence>
<evidence type="ECO:0000255" key="2"/>
<evidence type="ECO:0000269" key="3">
    <source ref="1"/>
</evidence>
<evidence type="ECO:0000303" key="4">
    <source ref="1"/>
</evidence>
<evidence type="ECO:0000305" key="5"/>
<dbReference type="EC" id="2.4.1.5"/>
<dbReference type="GO" id="GO:0005737">
    <property type="term" value="C:cytoplasm"/>
    <property type="evidence" value="ECO:0007669"/>
    <property type="project" value="UniProtKB-SubCell"/>
</dbReference>
<dbReference type="GO" id="GO:0047849">
    <property type="term" value="F:dextransucrase activity"/>
    <property type="evidence" value="ECO:0007669"/>
    <property type="project" value="UniProtKB-EC"/>
</dbReference>
<comment type="function">
    <text evidence="3">Involved in the production of dextran, an extracellular glucan polymer.</text>
</comment>
<comment type="catalytic activity">
    <reaction evidence="3">
        <text>[(1-&gt;6)-alpha-D-glucosyl](n) + sucrose = [(1-&gt;6)-alpha-D-glucosyl](n+1) + D-fructose</text>
        <dbReference type="Rhea" id="RHEA:18825"/>
        <dbReference type="Rhea" id="RHEA-COMP:11144"/>
        <dbReference type="Rhea" id="RHEA-COMP:11145"/>
        <dbReference type="ChEBI" id="CHEBI:17992"/>
        <dbReference type="ChEBI" id="CHEBI:18269"/>
        <dbReference type="ChEBI" id="CHEBI:37721"/>
        <dbReference type="EC" id="2.4.1.5"/>
    </reaction>
</comment>
<comment type="biophysicochemical properties">
    <phDependence>
        <text evidence="3">Optimum pH is 5.5.</text>
    </phDependence>
    <temperatureDependence>
        <text evidence="3">Optimum temperature is 35 degrees Celsius.</text>
    </temperatureDependence>
</comment>
<comment type="subcellular location">
    <subcellularLocation>
        <location evidence="3">Cytoplasm</location>
    </subcellularLocation>
</comment>
<comment type="induction">
    <text evidence="3">By sucrose.</text>
</comment>
<comment type="similarity">
    <text evidence="2">Belongs to the glycosyl hydrolase 70 family.</text>
</comment>
<protein>
    <recommendedName>
        <fullName evidence="4">Dextransucrase</fullName>
        <ecNumber>2.4.1.5</ecNumber>
    </recommendedName>
    <alternativeName>
        <fullName evidence="1">Glucansucrase</fullName>
    </alternativeName>
    <alternativeName>
        <fullName evidence="1">Sucrose 6-glucosyltransferase</fullName>
    </alternativeName>
</protein>
<reference evidence="5" key="1">
    <citation type="submission" date="2011-02" db="UniProtKB">
        <title>Characterization of intracellular dextransucrase from Leuconostoc mesenteroides AA1.</title>
        <authorList>
            <person name="Aman A."/>
            <person name="Qader S.A.U."/>
            <person name="Azhar A."/>
            <person name="Bano S."/>
        </authorList>
    </citation>
    <scope>PROTEIN SEQUENCE</scope>
    <scope>FUNCTION</scope>
    <scope>CATALYTIC ACTIVITY</scope>
    <scope>BIOPHYSICOCHEMICAL PROPERTIES</scope>
    <scope>SUBCELLULAR LOCATION</scope>
    <scope>INDUCTION</scope>
    <source>
        <strain evidence="3">AA1</strain>
    </source>
</reference>
<proteinExistence type="evidence at protein level"/>
<organism>
    <name type="scientific">Leuconostoc mesenteroides</name>
    <dbReference type="NCBI Taxonomy" id="1245"/>
    <lineage>
        <taxon>Bacteria</taxon>
        <taxon>Bacillati</taxon>
        <taxon>Bacillota</taxon>
        <taxon>Bacilli</taxon>
        <taxon>Lactobacillales</taxon>
        <taxon>Lactobacillaceae</taxon>
        <taxon>Leuconostoc</taxon>
    </lineage>
</organism>